<dbReference type="EC" id="3.4.-.-" evidence="2"/>
<dbReference type="EMBL" id="JH594606">
    <property type="protein sequence ID" value="EHQ03139.1"/>
    <property type="molecule type" value="Genomic_DNA"/>
</dbReference>
<dbReference type="RefSeq" id="WP_006989446.1">
    <property type="nucleotide sequence ID" value="NZ_JH594606.1"/>
</dbReference>
<dbReference type="SMR" id="H2BXL5"/>
<dbReference type="STRING" id="865937.Gilli_2517"/>
<dbReference type="eggNOG" id="COG1672">
    <property type="taxonomic scope" value="Bacteria"/>
</dbReference>
<dbReference type="HOGENOM" id="CLU_482140_0_0_10"/>
<dbReference type="OrthoDB" id="149072at2"/>
<dbReference type="Proteomes" id="UP000003844">
    <property type="component" value="Unassembled WGS sequence"/>
</dbReference>
<dbReference type="GO" id="GO:0008233">
    <property type="term" value="F:peptidase activity"/>
    <property type="evidence" value="ECO:0007669"/>
    <property type="project" value="UniProtKB-KW"/>
</dbReference>
<dbReference type="GO" id="GO:0051607">
    <property type="term" value="P:defense response to virus"/>
    <property type="evidence" value="ECO:0007669"/>
    <property type="project" value="UniProtKB-KW"/>
</dbReference>
<dbReference type="GO" id="GO:0006508">
    <property type="term" value="P:proteolysis"/>
    <property type="evidence" value="ECO:0007669"/>
    <property type="project" value="UniProtKB-KW"/>
</dbReference>
<sequence>MHIIFQYPIVDLRDIVSGGNGRLNDPKWPDPQERRQSFVSGFGKVKSRNLGGSDNFTGESYYCDSHSAIKFKELQHQGFSEGITTPASIFNSYRRYYNDGRFVGKVEIGLIDNLEKIIRNYPGSEGIQISSILKHYSNLEATVEDEQVKLYKAGPRLSKKYQRESTLREKHFQINPDYVQTGELTIVLTYSSHERLIVPRRSFSLEKIELPNDAGSIELFGYKLKQDGYPTKVWIIKIPANFRSKSGKHKTILRDLRMNLLRIHLEKETIKILLNAIKYKQIELEKESAEAKQVNAYFEQTSKKLFRKSRYDIKQENLLDFALQSEKSMDKGSFNSLKENITYFQDEFMLDNLGKLVGSMAVKPMLFVCSNPRDSNFIDFDKEYKDLKYNLQRAIDRDHYDIEIELSVTKDEFKDILDRYKPQFLHLSMHATVKDGLHFEDKNKAILPMSVKEFKQIIERYTKKHELKLVLISACNSKNHAKAIKEYCDFAIGTKAVFPVPAALIYSNNFYTTLFNGYQKDLEYCHSGAINAIEFNNPKFDDLDYKNKKIRVHEIPVLIKNSKYV</sequence>
<comment type="function">
    <text evidence="1 2">Probably a dedicated protease for substrate gasdermin bGSDM; cleaves the bGSDM precursor, releasing the pore-forming moiety, which integrates into the membrane and triggers cell death. Involved in defense against bacteriophages (Probable). Expression of bGSDM and this neighboring protease is not toxic in E.coli (PubMed:35025633).</text>
</comment>
<evidence type="ECO:0000269" key="1">
    <source>
    </source>
</evidence>
<evidence type="ECO:0000305" key="2">
    <source>
    </source>
</evidence>
<evidence type="ECO:0000312" key="3">
    <source>
        <dbReference type="EMBL" id="EHQ03139.1"/>
    </source>
</evidence>
<keyword id="KW-0051">Antiviral defense</keyword>
<keyword id="KW-0378">Hydrolase</keyword>
<keyword id="KW-0645">Protease</keyword>
<keyword id="KW-1185">Reference proteome</keyword>
<proteinExistence type="predicted"/>
<gene>
    <name evidence="3" type="ORF">Gilli_2517</name>
</gene>
<organism>
    <name type="scientific">Gillisia limnaea (strain DSM 15749 / LMG 21470 / R-8282)</name>
    <dbReference type="NCBI Taxonomy" id="865937"/>
    <lineage>
        <taxon>Bacteria</taxon>
        <taxon>Pseudomonadati</taxon>
        <taxon>Bacteroidota</taxon>
        <taxon>Flavobacteriia</taxon>
        <taxon>Flavobacteriales</taxon>
        <taxon>Flavobacteriaceae</taxon>
        <taxon>Gillisia</taxon>
    </lineage>
</organism>
<accession>H2BXL5</accession>
<reference key="1">
    <citation type="journal article" date="2012" name="Stand. Genomic Sci.">
        <title>Genome sequence of the Antarctic rhodopsins-containing flavobacterium Gillisia limnaea type strain (R-8282(T)).</title>
        <authorList>
            <person name="Riedel T."/>
            <person name="Held B."/>
            <person name="Nolan M."/>
            <person name="Lucas S."/>
            <person name="Lapidus A."/>
            <person name="Tice H."/>
            <person name="Del Rio T.G."/>
            <person name="Cheng J.F."/>
            <person name="Han C."/>
            <person name="Tapia R."/>
            <person name="Goodwin L.A."/>
            <person name="Pitluck S."/>
            <person name="Liolios K."/>
            <person name="Mavromatis K."/>
            <person name="Pagani I."/>
            <person name="Ivanova N."/>
            <person name="Mikhailova N."/>
            <person name="Pati A."/>
            <person name="Chen A."/>
            <person name="Palaniappan K."/>
            <person name="Land M."/>
            <person name="Rohde M."/>
            <person name="Tindall B.J."/>
            <person name="Detter J.C."/>
            <person name="Goker M."/>
            <person name="Bristow J."/>
            <person name="Eisen J.A."/>
            <person name="Markowitz V."/>
            <person name="Hugenholtz P."/>
            <person name="Kyrpides N.C."/>
            <person name="Klenk H.P."/>
            <person name="Woyke T."/>
        </authorList>
    </citation>
    <scope>NUCLEOTIDE SEQUENCE [LARGE SCALE GENOMIC DNA]</scope>
    <source>
        <strain>DSM 15749 / LMG 21470 / R-8282</strain>
    </source>
</reference>
<reference key="2">
    <citation type="journal article" date="2022" name="Science">
        <title>Bacterial gasdermins reveal an ancient mechanism of cell death.</title>
        <authorList>
            <person name="Johnson A.G."/>
            <person name="Wein T."/>
            <person name="Mayer M.L."/>
            <person name="Duncan-Lowey B."/>
            <person name="Yirmiya E."/>
            <person name="Oppenheimer-Shaanan Y."/>
            <person name="Amitai G."/>
            <person name="Sorek R."/>
            <person name="Kranzusch P.J."/>
        </authorList>
    </citation>
    <scope>FUNCTION</scope>
    <source>
        <strain>DSM 15749 / LMG 21470 / R-8282</strain>
    </source>
</reference>
<name>PROT_GILLR</name>
<feature type="chain" id="PRO_0000455578" description="Probable protease Gilli_2517">
    <location>
        <begin position="1"/>
        <end position="565"/>
    </location>
</feature>
<protein>
    <recommendedName>
        <fullName>Probable protease Gilli_2517</fullName>
        <ecNumber evidence="2">3.4.-.-</ecNumber>
    </recommendedName>
</protein>